<feature type="signal peptide" evidence="2">
    <location>
        <begin position="1"/>
        <end position="20"/>
    </location>
</feature>
<feature type="chain" id="PRO_0000024617" description="Gametocyte surface protein P230">
    <location>
        <begin position="21"/>
        <end position="3135"/>
    </location>
</feature>
<feature type="domain" description="6-Cys 1" evidence="3">
    <location>
        <begin position="589"/>
        <end position="730"/>
    </location>
</feature>
<feature type="domain" description="6-Cys 2" evidence="3">
    <location>
        <begin position="733"/>
        <end position="887"/>
    </location>
</feature>
<feature type="domain" description="6-Cys 3" evidence="3">
    <location>
        <begin position="918"/>
        <end position="1133"/>
    </location>
</feature>
<feature type="domain" description="6-Cys 4" evidence="3">
    <location>
        <begin position="1136"/>
        <end position="1275"/>
    </location>
</feature>
<feature type="domain" description="6-Cys 5" evidence="3">
    <location>
        <begin position="1285"/>
        <end position="1432"/>
    </location>
</feature>
<feature type="domain" description="6-Cys 6" evidence="3">
    <location>
        <begin position="1435"/>
        <end position="1560"/>
    </location>
</feature>
<feature type="domain" description="6-Cys 7" evidence="3">
    <location>
        <begin position="1694"/>
        <end position="1907"/>
    </location>
</feature>
<feature type="domain" description="6-Cys 8" evidence="3">
    <location>
        <begin position="1910"/>
        <end position="2035"/>
    </location>
</feature>
<feature type="domain" description="6-Cys 9" evidence="3">
    <location>
        <begin position="2052"/>
        <end position="2199"/>
    </location>
</feature>
<feature type="domain" description="6-Cys 10" evidence="3">
    <location>
        <begin position="2204"/>
        <end position="2374"/>
    </location>
</feature>
<feature type="domain" description="6-Cys 11" evidence="3">
    <location>
        <begin position="2448"/>
        <end position="2663"/>
    </location>
</feature>
<feature type="domain" description="6-Cys 12" evidence="3">
    <location>
        <begin position="2666"/>
        <end position="2827"/>
    </location>
</feature>
<feature type="domain" description="6-Cys 13" evidence="3">
    <location>
        <begin position="2831"/>
        <end position="2979"/>
    </location>
</feature>
<feature type="domain" description="6-Cys 14" evidence="3">
    <location>
        <begin position="2982"/>
        <end position="3113"/>
    </location>
</feature>
<feature type="region of interest" description="Disordered" evidence="4">
    <location>
        <begin position="266"/>
        <end position="470"/>
    </location>
</feature>
<feature type="region of interest" description="Disordered" evidence="4">
    <location>
        <begin position="2410"/>
        <end position="2432"/>
    </location>
</feature>
<feature type="compositionally biased region" description="Acidic residues" evidence="4">
    <location>
        <begin position="276"/>
        <end position="321"/>
    </location>
</feature>
<feature type="compositionally biased region" description="Acidic residues" evidence="4">
    <location>
        <begin position="329"/>
        <end position="345"/>
    </location>
</feature>
<feature type="compositionally biased region" description="Basic and acidic residues" evidence="4">
    <location>
        <begin position="346"/>
        <end position="358"/>
    </location>
</feature>
<feature type="compositionally biased region" description="Acidic residues" evidence="4">
    <location>
        <begin position="376"/>
        <end position="444"/>
    </location>
</feature>
<feature type="compositionally biased region" description="Acidic residues" evidence="4">
    <location>
        <begin position="458"/>
        <end position="467"/>
    </location>
</feature>
<feature type="compositionally biased region" description="Basic and acidic residues" evidence="4">
    <location>
        <begin position="2422"/>
        <end position="2432"/>
    </location>
</feature>
<feature type="glycosylation site" description="N-linked (GlcNAc...) asparagine" evidence="2">
    <location>
        <position position="76"/>
    </location>
</feature>
<feature type="glycosylation site" description="N-linked (GlcNAc...) asparagine" evidence="2">
    <location>
        <position position="111"/>
    </location>
</feature>
<feature type="glycosylation site" description="N-linked (GlcNAc...) asparagine" evidence="2">
    <location>
        <position position="135"/>
    </location>
</feature>
<feature type="glycosylation site" description="N-linked (GlcNAc...) asparagine" evidence="2">
    <location>
        <position position="239"/>
    </location>
</feature>
<feature type="glycosylation site" description="N-linked (GlcNAc...) asparagine" evidence="2">
    <location>
        <position position="585"/>
    </location>
</feature>
<feature type="glycosylation site" description="N-linked (GlcNAc...) asparagine" evidence="2">
    <location>
        <position position="821"/>
    </location>
</feature>
<feature type="glycosylation site" description="N-linked (GlcNAc...) asparagine" evidence="2">
    <location>
        <position position="829"/>
    </location>
</feature>
<feature type="glycosylation site" description="N-linked (GlcNAc...) asparagine" evidence="2">
    <location>
        <position position="889"/>
    </location>
</feature>
<feature type="glycosylation site" description="N-linked (GlcNAc...) asparagine" evidence="2">
    <location>
        <position position="961"/>
    </location>
</feature>
<feature type="glycosylation site" description="N-linked (GlcNAc...) asparagine" evidence="2">
    <location>
        <position position="1079"/>
    </location>
</feature>
<feature type="glycosylation site" description="N-linked (GlcNAc...) asparagine" evidence="2">
    <location>
        <position position="1089"/>
    </location>
</feature>
<feature type="glycosylation site" description="N-linked (GlcNAc...) asparagine" evidence="2">
    <location>
        <position position="1153"/>
    </location>
</feature>
<feature type="glycosylation site" description="N-linked (GlcNAc...) asparagine" evidence="2">
    <location>
        <position position="1267"/>
    </location>
</feature>
<feature type="glycosylation site" description="N-linked (GlcNAc...) asparagine" evidence="2">
    <location>
        <position position="1300"/>
    </location>
</feature>
<feature type="glycosylation site" description="N-linked (GlcNAc...) asparagine" evidence="2">
    <location>
        <position position="1452"/>
    </location>
</feature>
<feature type="glycosylation site" description="N-linked (GlcNAc...) asparagine" evidence="2">
    <location>
        <position position="1492"/>
    </location>
</feature>
<feature type="glycosylation site" description="N-linked (GlcNAc...) asparagine" evidence="2">
    <location>
        <position position="1508"/>
    </location>
</feature>
<feature type="glycosylation site" description="N-linked (GlcNAc...) asparagine" evidence="2">
    <location>
        <position position="1621"/>
    </location>
</feature>
<feature type="glycosylation site" description="N-linked (GlcNAc...) asparagine" evidence="2">
    <location>
        <position position="1624"/>
    </location>
</feature>
<feature type="glycosylation site" description="N-linked (GlcNAc...) asparagine" evidence="2">
    <location>
        <position position="1753"/>
    </location>
</feature>
<feature type="glycosylation site" description="N-linked (GlcNAc...) asparagine" evidence="2">
    <location>
        <position position="1804"/>
    </location>
</feature>
<feature type="glycosylation site" description="N-linked (GlcNAc...) asparagine" evidence="2">
    <location>
        <position position="1882"/>
    </location>
</feature>
<feature type="glycosylation site" description="N-linked (GlcNAc...) asparagine" evidence="2">
    <location>
        <position position="1920"/>
    </location>
</feature>
<feature type="glycosylation site" description="N-linked (GlcNAc...) asparagine" evidence="2">
    <location>
        <position position="1954"/>
    </location>
</feature>
<feature type="glycosylation site" description="N-linked (GlcNAc...) asparagine" evidence="2">
    <location>
        <position position="1972"/>
    </location>
</feature>
<feature type="glycosylation site" description="N-linked (GlcNAc...) asparagine" evidence="2">
    <location>
        <position position="2178"/>
    </location>
</feature>
<feature type="glycosylation site" description="N-linked (GlcNAc...) asparagine" evidence="2">
    <location>
        <position position="2199"/>
    </location>
</feature>
<feature type="glycosylation site" description="N-linked (GlcNAc...) asparagine" evidence="2">
    <location>
        <position position="2312"/>
    </location>
</feature>
<feature type="glycosylation site" description="N-linked (GlcNAc...) asparagine" evidence="2">
    <location>
        <position position="2351"/>
    </location>
</feature>
<feature type="glycosylation site" description="N-linked (GlcNAc...) asparagine" evidence="2">
    <location>
        <position position="2439"/>
    </location>
</feature>
<feature type="glycosylation site" description="N-linked (GlcNAc...) asparagine" evidence="2">
    <location>
        <position position="2457"/>
    </location>
</feature>
<feature type="glycosylation site" description="N-linked (GlcNAc...) asparagine" evidence="2">
    <location>
        <position position="2466"/>
    </location>
</feature>
<feature type="glycosylation site" description="N-linked (GlcNAc...) asparagine" evidence="2">
    <location>
        <position position="2504"/>
    </location>
</feature>
<feature type="glycosylation site" description="N-linked (GlcNAc...) asparagine" evidence="2">
    <location>
        <position position="2586"/>
    </location>
</feature>
<feature type="glycosylation site" description="N-linked (GlcNAc...) asparagine" evidence="2">
    <location>
        <position position="2611"/>
    </location>
</feature>
<feature type="glycosylation site" description="N-linked (GlcNAc...) asparagine" evidence="2">
    <location>
        <position position="2650"/>
    </location>
</feature>
<feature type="glycosylation site" description="N-linked (GlcNAc...) asparagine" evidence="2">
    <location>
        <position position="2677"/>
    </location>
</feature>
<feature type="glycosylation site" description="N-linked (GlcNAc...) asparagine" evidence="2">
    <location>
        <position position="2688"/>
    </location>
</feature>
<feature type="glycosylation site" description="N-linked (GlcNAc...) asparagine" evidence="2">
    <location>
        <position position="2952"/>
    </location>
</feature>
<feature type="glycosylation site" description="N-linked (GlcNAc...) asparagine" evidence="2">
    <location>
        <position position="3011"/>
    </location>
</feature>
<feature type="glycosylation site" description="N-linked (GlcNAc...) asparagine" evidence="2">
    <location>
        <position position="3016"/>
    </location>
</feature>
<feature type="glycosylation site" description="N-linked (GlcNAc...) asparagine" evidence="2">
    <location>
        <position position="3066"/>
    </location>
</feature>
<feature type="glycosylation site" description="N-linked (GlcNAc...) asparagine" evidence="2">
    <location>
        <position position="3093"/>
    </location>
</feature>
<feature type="glycosylation site" description="N-linked (GlcNAc...) asparagine" evidence="2">
    <location>
        <position position="3096"/>
    </location>
</feature>
<feature type="disulfide bond" evidence="7 8 11 12">
    <location>
        <begin position="593"/>
        <end position="611"/>
    </location>
</feature>
<feature type="disulfide bond" evidence="7 8 11 12">
    <location>
        <begin position="626"/>
        <end position="706"/>
    </location>
</feature>
<feature type="disulfide bond" evidence="3">
    <location>
        <begin position="737"/>
        <end position="781"/>
    </location>
</feature>
<feature type="disulfide bond" evidence="3">
    <location>
        <begin position="804"/>
        <end position="862"/>
    </location>
</feature>
<feature type="disulfide bond" evidence="3">
    <location>
        <begin position="1140"/>
        <end position="1161"/>
    </location>
</feature>
<feature type="disulfide bond" evidence="3">
    <location>
        <begin position="1175"/>
        <end position="1251"/>
    </location>
</feature>
<feature type="disulfide bond" evidence="3">
    <location>
        <begin position="1200"/>
        <end position="1249"/>
    </location>
</feature>
<feature type="disulfide bond" evidence="3">
    <location>
        <begin position="1439"/>
        <end position="1459"/>
    </location>
</feature>
<feature type="disulfide bond" evidence="3">
    <location>
        <begin position="1473"/>
        <end position="1534"/>
    </location>
</feature>
<feature type="disulfide bond" evidence="3">
    <location>
        <begin position="1483"/>
        <end position="1532"/>
    </location>
</feature>
<feature type="disulfide bond" evidence="3">
    <location>
        <begin position="1698"/>
        <end position="1726"/>
    </location>
</feature>
<feature type="disulfide bond" evidence="3">
    <location>
        <begin position="1740"/>
        <end position="1881"/>
    </location>
</feature>
<feature type="disulfide bond" evidence="3">
    <location>
        <begin position="1914"/>
        <end position="1938"/>
    </location>
</feature>
<feature type="disulfide bond" evidence="3">
    <location>
        <begin position="1952"/>
        <end position="2017"/>
    </location>
</feature>
<feature type="disulfide bond" evidence="3">
    <location>
        <begin position="1963"/>
        <end position="2015"/>
    </location>
</feature>
<feature type="disulfide bond" evidence="3">
    <location>
        <begin position="2056"/>
        <end position="2074"/>
    </location>
</feature>
<feature type="disulfide bond" evidence="3">
    <location>
        <begin position="2208"/>
        <end position="2229"/>
    </location>
</feature>
<feature type="disulfide bond" evidence="3">
    <location>
        <begin position="2243"/>
        <end position="2356"/>
    </location>
</feature>
<feature type="disulfide bond" evidence="3">
    <location>
        <begin position="2254"/>
        <end position="2354"/>
    </location>
</feature>
<feature type="disulfide bond" evidence="3">
    <location>
        <begin position="2452"/>
        <end position="2476"/>
    </location>
</feature>
<feature type="disulfide bond" evidence="3">
    <location>
        <begin position="2490"/>
        <end position="2638"/>
    </location>
</feature>
<feature type="disulfide bond" evidence="3">
    <location>
        <begin position="2670"/>
        <end position="2706"/>
    </location>
</feature>
<feature type="disulfide bond" evidence="3">
    <location>
        <begin position="2720"/>
        <end position="2804"/>
    </location>
</feature>
<feature type="disulfide bond" evidence="3">
    <location>
        <begin position="2730"/>
        <end position="2802"/>
    </location>
</feature>
<feature type="disulfide bond" evidence="3">
    <location>
        <begin position="2986"/>
        <end position="3010"/>
    </location>
</feature>
<feature type="disulfide bond" evidence="3">
    <location>
        <begin position="3024"/>
        <end position="3090"/>
    </location>
</feature>
<feature type="disulfide bond" evidence="3">
    <location>
        <begin position="3035"/>
        <end position="3088"/>
    </location>
</feature>
<feature type="helix" evidence="19">
    <location>
        <begin position="554"/>
        <end position="557"/>
    </location>
</feature>
<feature type="strand" evidence="19">
    <location>
        <begin position="563"/>
        <end position="566"/>
    </location>
</feature>
<feature type="turn" evidence="14">
    <location>
        <begin position="568"/>
        <end position="571"/>
    </location>
</feature>
<feature type="strand" evidence="13">
    <location>
        <begin position="572"/>
        <end position="574"/>
    </location>
</feature>
<feature type="helix" evidence="17">
    <location>
        <begin position="576"/>
        <end position="578"/>
    </location>
</feature>
<feature type="strand" evidence="17">
    <location>
        <begin position="580"/>
        <end position="583"/>
    </location>
</feature>
<feature type="strand" evidence="17">
    <location>
        <begin position="585"/>
        <end position="587"/>
    </location>
</feature>
<feature type="strand" evidence="18">
    <location>
        <begin position="590"/>
        <end position="594"/>
    </location>
</feature>
<feature type="turn" evidence="18">
    <location>
        <begin position="596"/>
        <end position="599"/>
    </location>
</feature>
<feature type="strand" evidence="13">
    <location>
        <begin position="602"/>
        <end position="605"/>
    </location>
</feature>
<feature type="strand" evidence="18">
    <location>
        <begin position="608"/>
        <end position="615"/>
    </location>
</feature>
<feature type="strand" evidence="18">
    <location>
        <begin position="617"/>
        <end position="619"/>
    </location>
</feature>
<feature type="strand" evidence="18">
    <location>
        <begin position="621"/>
        <end position="625"/>
    </location>
</feature>
<feature type="turn" evidence="18">
    <location>
        <begin position="633"/>
        <end position="635"/>
    </location>
</feature>
<feature type="strand" evidence="18">
    <location>
        <begin position="640"/>
        <end position="643"/>
    </location>
</feature>
<feature type="turn" evidence="18">
    <location>
        <begin position="644"/>
        <end position="648"/>
    </location>
</feature>
<feature type="strand" evidence="18">
    <location>
        <begin position="649"/>
        <end position="654"/>
    </location>
</feature>
<feature type="strand" evidence="18">
    <location>
        <begin position="657"/>
        <end position="662"/>
    </location>
</feature>
<feature type="helix" evidence="18">
    <location>
        <begin position="663"/>
        <end position="666"/>
    </location>
</feature>
<feature type="strand" evidence="18">
    <location>
        <begin position="674"/>
        <end position="676"/>
    </location>
</feature>
<feature type="strand" evidence="18">
    <location>
        <begin position="679"/>
        <end position="682"/>
    </location>
</feature>
<feature type="helix" evidence="18">
    <location>
        <begin position="683"/>
        <end position="685"/>
    </location>
</feature>
<feature type="strand" evidence="18">
    <location>
        <begin position="687"/>
        <end position="691"/>
    </location>
</feature>
<feature type="strand" evidence="15">
    <location>
        <begin position="696"/>
        <end position="698"/>
    </location>
</feature>
<feature type="strand" evidence="18">
    <location>
        <begin position="700"/>
        <end position="707"/>
    </location>
</feature>
<feature type="strand" evidence="18">
    <location>
        <begin position="720"/>
        <end position="727"/>
    </location>
</feature>
<feature type="strand" evidence="17">
    <location>
        <begin position="734"/>
        <end position="740"/>
    </location>
</feature>
<feature type="strand" evidence="16">
    <location>
        <begin position="741"/>
        <end position="743"/>
    </location>
</feature>
<feature type="helix" evidence="17">
    <location>
        <begin position="759"/>
        <end position="766"/>
    </location>
</feature>
<feature type="strand" evidence="17">
    <location>
        <begin position="767"/>
        <end position="776"/>
    </location>
</feature>
<feature type="strand" evidence="17">
    <location>
        <begin position="781"/>
        <end position="785"/>
    </location>
</feature>
<feature type="strand" evidence="17">
    <location>
        <begin position="790"/>
        <end position="794"/>
    </location>
</feature>
<feature type="strand" evidence="17">
    <location>
        <begin position="799"/>
        <end position="802"/>
    </location>
</feature>
<feature type="turn" evidence="17">
    <location>
        <begin position="804"/>
        <end position="806"/>
    </location>
</feature>
<feature type="strand" evidence="16">
    <location>
        <begin position="807"/>
        <end position="810"/>
    </location>
</feature>
<feature type="strand" evidence="16">
    <location>
        <begin position="812"/>
        <end position="814"/>
    </location>
</feature>
<feature type="helix" evidence="17">
    <location>
        <begin position="824"/>
        <end position="827"/>
    </location>
</feature>
<feature type="strand" evidence="17">
    <location>
        <begin position="832"/>
        <end position="835"/>
    </location>
</feature>
<feature type="strand" evidence="17">
    <location>
        <begin position="840"/>
        <end position="842"/>
    </location>
</feature>
<feature type="strand" evidence="17">
    <location>
        <begin position="845"/>
        <end position="849"/>
    </location>
</feature>
<feature type="strand" evidence="17">
    <location>
        <begin position="858"/>
        <end position="866"/>
    </location>
</feature>
<feature type="strand" evidence="17">
    <location>
        <begin position="877"/>
        <end position="885"/>
    </location>
</feature>
<evidence type="ECO:0000250" key="1">
    <source>
        <dbReference type="UniProtKB" id="P68875"/>
    </source>
</evidence>
<evidence type="ECO:0000255" key="2"/>
<evidence type="ECO:0000255" key="3">
    <source>
        <dbReference type="PROSITE-ProRule" id="PRU01038"/>
    </source>
</evidence>
<evidence type="ECO:0000256" key="4">
    <source>
        <dbReference type="SAM" id="MobiDB-lite"/>
    </source>
</evidence>
<evidence type="ECO:0000269" key="5">
    <source>
    </source>
</evidence>
<evidence type="ECO:0000269" key="6">
    <source>
    </source>
</evidence>
<evidence type="ECO:0000269" key="7">
    <source>
    </source>
</evidence>
<evidence type="ECO:0000269" key="8">
    <source>
    </source>
</evidence>
<evidence type="ECO:0000269" key="9">
    <source>
    </source>
</evidence>
<evidence type="ECO:0000305" key="10"/>
<evidence type="ECO:0007744" key="11">
    <source>
        <dbReference type="PDB" id="6OHG"/>
    </source>
</evidence>
<evidence type="ECO:0007744" key="12">
    <source>
        <dbReference type="PDB" id="7JUM"/>
    </source>
</evidence>
<evidence type="ECO:0007829" key="13">
    <source>
        <dbReference type="PDB" id="6OHG"/>
    </source>
</evidence>
<evidence type="ECO:0007829" key="14">
    <source>
        <dbReference type="PDB" id="7JUM"/>
    </source>
</evidence>
<evidence type="ECO:0007829" key="15">
    <source>
        <dbReference type="PDB" id="7UI1"/>
    </source>
</evidence>
<evidence type="ECO:0007829" key="16">
    <source>
        <dbReference type="PDB" id="7USR"/>
    </source>
</evidence>
<evidence type="ECO:0007829" key="17">
    <source>
        <dbReference type="PDB" id="7USS"/>
    </source>
</evidence>
<evidence type="ECO:0007829" key="18">
    <source>
        <dbReference type="PDB" id="7UST"/>
    </source>
</evidence>
<evidence type="ECO:0007829" key="19">
    <source>
        <dbReference type="PDB" id="7UVO"/>
    </source>
</evidence>
<reference key="1">
    <citation type="submission" date="1994-12" db="EMBL/GenBank/DDBJ databases">
        <title>Gene cloning of a large Plasmodium falciparum sexual stage surface antigen.</title>
        <authorList>
            <person name="Bhatti S."/>
            <person name="Alano P."/>
            <person name="Luo C."/>
            <person name="Hansra S."/>
            <person name="Aikawa M."/>
            <person name="Carter R."/>
            <person name="Elliott J.F."/>
        </authorList>
    </citation>
    <scope>NUCLEOTIDE SEQUENCE [MRNA]</scope>
</reference>
<reference key="2">
    <citation type="journal article" date="1998" name="Science">
        <title>Chromosome 2 sequence of the human malaria parasite Plasmodium falciparum.</title>
        <authorList>
            <person name="Gardner M.J."/>
            <person name="Tettelin H."/>
            <person name="Carucci D.J."/>
            <person name="Cummings L.M."/>
            <person name="Aravind L."/>
            <person name="Koonin E.V."/>
            <person name="Shallom S.J."/>
            <person name="Mason T."/>
            <person name="Yu K."/>
            <person name="Fujii C."/>
            <person name="Pederson J."/>
            <person name="Shen K."/>
            <person name="Jing J."/>
            <person name="Aston C."/>
            <person name="Lai Z."/>
            <person name="Schwartz D.C."/>
            <person name="Pertea M."/>
            <person name="Salzberg S.L."/>
            <person name="Zhou L."/>
            <person name="Sutton G.G."/>
            <person name="Clayton R."/>
            <person name="White O."/>
            <person name="Smith H.O."/>
            <person name="Fraser C.M."/>
            <person name="Adams M.D."/>
            <person name="Venter J.C."/>
            <person name="Hoffman S.L."/>
        </authorList>
    </citation>
    <scope>NUCLEOTIDE SEQUENCE [LARGE SCALE GENOMIC DNA]</scope>
    <source>
        <strain>3D7</strain>
    </source>
</reference>
<reference key="3">
    <citation type="journal article" date="2002" name="Nature">
        <title>Genome sequence of the human malaria parasite Plasmodium falciparum.</title>
        <authorList>
            <person name="Gardner M.J."/>
            <person name="Hall N."/>
            <person name="Fung E."/>
            <person name="White O."/>
            <person name="Berriman M."/>
            <person name="Hyman R.W."/>
            <person name="Carlton J.M."/>
            <person name="Pain A."/>
            <person name="Nelson K.E."/>
            <person name="Bowman S."/>
            <person name="Paulsen I.T."/>
            <person name="James K.D."/>
            <person name="Eisen J.A."/>
            <person name="Rutherford K.M."/>
            <person name="Salzberg S.L."/>
            <person name="Craig A."/>
            <person name="Kyes S."/>
            <person name="Chan M.-S."/>
            <person name="Nene V."/>
            <person name="Shallom S.J."/>
            <person name="Suh B."/>
            <person name="Peterson J."/>
            <person name="Angiuoli S."/>
            <person name="Pertea M."/>
            <person name="Allen J."/>
            <person name="Selengut J."/>
            <person name="Haft D."/>
            <person name="Mather M.W."/>
            <person name="Vaidya A.B."/>
            <person name="Martin D.M.A."/>
            <person name="Fairlamb A.H."/>
            <person name="Fraunholz M.J."/>
            <person name="Roos D.S."/>
            <person name="Ralph S.A."/>
            <person name="McFadden G.I."/>
            <person name="Cummings L.M."/>
            <person name="Subramanian G.M."/>
            <person name="Mungall C."/>
            <person name="Venter J.C."/>
            <person name="Carucci D.J."/>
            <person name="Hoffman S.L."/>
            <person name="Newbold C."/>
            <person name="Davis R.W."/>
            <person name="Fraser C.M."/>
            <person name="Barrell B.G."/>
        </authorList>
    </citation>
    <scope>NUCLEOTIDE SEQUENCE [LARGE SCALE GENOMIC DNA]</scope>
    <source>
        <strain>3D7</strain>
    </source>
</reference>
<reference key="4">
    <citation type="journal article" date="1992" name="Mol. Biochem. Parasitol.">
        <title>Further characterization of interactions between gamete surface antigens of Plasmodium falciparum.</title>
        <authorList>
            <person name="Kumar N."/>
            <person name="Wizel B."/>
        </authorList>
    </citation>
    <scope>INTERACTION WITH PF45/48</scope>
    <scope>DEVELOPMENTAL STAGE</scope>
</reference>
<reference key="5">
    <citation type="journal article" date="1996" name="Mol. Biochem. Parasitol.">
        <title>Stage-specific processing of Pfs230, a Plasmodium falciparum transmission-blocking vaccine candidate.</title>
        <authorList>
            <person name="Williamson K.C."/>
            <person name="Fujioka H."/>
            <person name="Aikawa M."/>
            <person name="Kaslow D.C."/>
        </authorList>
    </citation>
    <scope>SUBCELLULAR LOCATION</scope>
    <scope>DEVELOPMENTAL STAGE</scope>
    <scope>PROTEOLYTIC CLEAVAGE</scope>
</reference>
<reference key="6">
    <citation type="journal article" date="2003" name="Parasite Immunol.">
        <title>Pfs230: from malaria transmission-blocking vaccine candidate toward function.</title>
        <authorList>
            <person name="Williamson K.C."/>
        </authorList>
    </citation>
    <scope>REVIEW</scope>
</reference>
<reference key="7">
    <citation type="journal article" date="2005" name="Proc. Natl. Acad. Sci. U.S.A.">
        <title>Structural models for the protein family characterized by gamete surface protein Pfs230 of Plasmodium falciparum.</title>
        <authorList>
            <person name="Gerloff D.L."/>
            <person name="Creasey A."/>
            <person name="Maslau S."/>
            <person name="Carter R."/>
        </authorList>
    </citation>
    <scope>3D-STRUCTURE MODELING</scope>
</reference>
<reference key="8">
    <citation type="journal article" date="2006" name="Mol. Microbiol.">
        <title>Malaria transmission-blocking antigen, Pfs230, mediates human red blood cell binding to exflagellating male parasites and oocyst production.</title>
        <authorList>
            <person name="Eksi S."/>
            <person name="Czesny B."/>
            <person name="van Gemert G.J."/>
            <person name="Sauerwein R.W."/>
            <person name="Eling W."/>
            <person name="Williamson K.C."/>
        </authorList>
    </citation>
    <scope>FUNCTION</scope>
</reference>
<reference evidence="11" key="9">
    <citation type="journal article" date="2020" name="Commun. Biol.">
        <title>Structure and function of a malaria transmission blocking vaccine targeting Pfs230 and Pfs230-Pfs48/45 proteins.</title>
        <authorList>
            <person name="Singh K."/>
            <person name="Burkhardt M."/>
            <person name="Nakuchima S."/>
            <person name="Herrera R."/>
            <person name="Muratova O."/>
            <person name="Gittis A.G."/>
            <person name="Kelnhofer E."/>
            <person name="Reiter K."/>
            <person name="Smelkinson M."/>
            <person name="Veltri D."/>
            <person name="Swihart B.J."/>
            <person name="Shimp R. Jr."/>
            <person name="Nguyen V."/>
            <person name="Zhang B."/>
            <person name="MacDonald N.J."/>
            <person name="Duffy P.E."/>
            <person name="Garboczi D.N."/>
            <person name="Narum D.L."/>
        </authorList>
    </citation>
    <scope>X-RAY CRYSTALLOGRAPHY (2.38 ANGSTROMS) OF 542-736 OF MUTANT GLU-585 AND IN COMPLEX WITH ANTIBODY</scope>
    <scope>BIOTECHNOLOGY</scope>
    <scope>DISULFIDE BONDS</scope>
</reference>
<reference evidence="12" key="10">
    <citation type="journal article" date="2021" name="Nat. Commun.">
        <title>A human monoclonal antibody blocks malaria transmission and defines a highly conserved neutralizing epitope on gametes.</title>
        <authorList>
            <person name="Coelho C.H."/>
            <person name="Tang W.K."/>
            <person name="Burkhardt M."/>
            <person name="Galson J.D."/>
            <person name="Muratova O."/>
            <person name="Salinas N.D."/>
            <person name="Alves E Silva T.L."/>
            <person name="Reiter K."/>
            <person name="MacDonald N.J."/>
            <person name="Nguyen V."/>
            <person name="Herrera R."/>
            <person name="Shimp R."/>
            <person name="Narum D.L."/>
            <person name="Byrne-Steele M."/>
            <person name="Pan W."/>
            <person name="Hou X."/>
            <person name="Brown B."/>
            <person name="Eisenhower M."/>
            <person name="Han J."/>
            <person name="Jenkins B.J."/>
            <person name="Doritchamou J.Y.A."/>
            <person name="Smelkinson M.G."/>
            <person name="Vega-Rodriguez J."/>
            <person name="Trueck J."/>
            <person name="Taylor J.J."/>
            <person name="Sagara I."/>
            <person name="Renn J.P."/>
            <person name="Tolia N.H."/>
            <person name="Duffy P.E."/>
        </authorList>
    </citation>
    <scope>X-RAY CRYSTALLOGRAPHY (2.00 ANGSTROMS) OF 542-736 OF MUTANT GLU-585 AND IN COMPLEX WITH ANTIBODY</scope>
    <scope>BIOTECHNOLOGY</scope>
    <scope>DISULFIDE BONDS</scope>
</reference>
<keyword id="KW-0002">3D-structure</keyword>
<keyword id="KW-1003">Cell membrane</keyword>
<keyword id="KW-1015">Disulfide bond</keyword>
<keyword id="KW-0325">Glycoprotein</keyword>
<keyword id="KW-0461">Malaria</keyword>
<keyword id="KW-0472">Membrane</keyword>
<keyword id="KW-1185">Reference proteome</keyword>
<keyword id="KW-0677">Repeat</keyword>
<keyword id="KW-0732">Signal</keyword>
<protein>
    <recommendedName>
        <fullName>Gametocyte surface protein P230</fullName>
    </recommendedName>
</protein>
<sequence length="3135" mass="363218">MKKIITLKNLFLIILVYIFSEKKDLRCNVIKGNNIKDDEDKRFHLFYYSHNLFKTPETKEKKNKKECFYKNGGIYNLSKEIRMRKDTSVKIKQRTCPFHKEGSSFEMGSKNITCFYPIVGKKERKTLDTIIIKKNVTNDHVVSSDMHSNVQEKNMILIRNIDKENKNDIQNVEEKIQRDTYENKDYESDDTLIEWFDDNTNEENFLLTFLKRCLMKIFSSPKRKKTVVQKKHKSNFFINSSLKYIYMYLTPSDSFNLVRRNRNLDEEDMSPRDNFVIDDEEEEEEEEEEEEEEEEEEEEEEEEEYDDYVYEESGDETEEQLQEEHQEEVGAESSEESFNDEDEDSVEARDGDMIRVDEYYEDQDGDTYDSTIKNEDVDEEVGEEVGEEVGEEVGEEVGEEVGEEVGEEVGEEVGEEEGEEVGEGVGEEVGEEEGEEVGEEEGEYVDEKERQGEIYPFGDEEEKDEGGESFTYEKSEVDKTDLFKFIEGGEGDDVYKVDGSKVLLDDDTISRVSKKHTARDGEYGEYGEAVEDGENVIKIIRSVLQSGALPSVGVDELDKIDLSYETTESGDTAVSEDSYDKYASNNTNKEYVCDFTDQLKPTESGPKVKKCEVKVNEPLIKVKIICPLKGSVEKLYDNIEYVPKKSPYVVLTKEETKLKEKLLSKLIYGLLISPTVNEKENNFKEGVIEFTLPPVVHKATVFYFICDNSKTEDDNKKGNRGIVEVYVEPYGNKINGCAFLDEDEEEEKYGNQIEEDEHNEKIKMKTFFTQNIYKKNNIYPCYMKLYSGDIGGILFPKNIKSTTCFEEMIPYNKEIKWNKENKSLGNLVNNSVVYNKEMNAKYFNVQYVHIPTSYKDTLNLFCSIILKEEESNLISTSYLVYVSINEELNFSLFDFYESFVPIKKTIQVAQKNVNNKEHDYTCDFTDKLDKTVPSTANGKKLFICRKHLKEFDTFTLKCNVNKTQYPNIEIFPKTLKDKKEVLKLDLDIQYQMFSKFFKFNTQNAKYLNLYPYYLIFPFNHIGKKELKNNPTYKNHKDVKYFEQSSVLSPLSSADSLGKLLNFLDTQETVCLTEKIRYLNLSINELGSDNNTFSVTFQVPPYIDIKEPFYFMFGCNNNKGEGNIGIVELLISKQEEKIKGCNFHESKLDYFNENISSDTHECTLHAYENDIIGFNCLETTHPNEVEVEVEDAEIYLQPENCFNNVYKGLNSVDITTILKNAQTYNINNKKTPTFLKIPPYNLLEDVEISCQCTIKQVVKKIKVIITKNDTVLLKREVQSESTLDDKIYKCEHENFINPRVNKTFDENVEYTCNIKIENFFNYIQIFCPAKDLGIYKNIQMYYDIVKPTRVPQFKKFNNEELHKLIPNSEMLHKTKEMLILYNEEKVDLLHFYVFLPIYIKDIYEFNIVCDNSKTMWKNQLGGKVIYHITVSKREQKVKGCSFDNEHAHMFSYNKTNVKNCIIDAKPKDLIGFVCPSGTLKLTNCFKDAIVHTNLTNINGILYLKNNLANFTYKHQFNYMEIPALMDNDISFKCICVDLKKKKYNVKSPLGPKVLRALYKKLNIKFDNYVTGTDQNKYLMTYMDLHLSHKRNYLKELFHDLGKKKPADTDANPESIIESLSINESNESGPFPTGDVDAEHLILEGYDTWESLYDEQLEEVIYNDIESLELKDIEQYVLQVNLKAPKLMMSAQIHNNRHVCDFSKNNLIVPESLKKKEELGGNPVNIHCYALLKPLDTLYVKCPTSKDNYEAAKVNISENDNEYELQVISLIEKRFHNFETLESKKPGNGDVVVHNGVVDTGPVLDNSTFEKYFKNIKIKPDKFFEKVINEYDDTEEEKDLESILPGAIVSPMKVLKKKDPFTSYAAFVVPPIVPKDLHFKVECNNTEYKDENQYISGYNGIIHIDISNSNRKINGCDFSTNNSSILTSSVKLVNGETKNCEININNNEVFGIICDNETNLDPEKCFHEIYSKDNKTVKKFREVIPNIDIFSLHNSNKKKVAYAKVPLDYINKLLFSCSCKTSHTNTIGTMKVTLNKDEKEEEDFKTAQGIKHNNVHLCNFFDNPELTFDNNKIVLCKIDAELFSEVIIQLPIFGTKNVEEGVQNEEYKKFSLKPSLVFDDNNNDIKVIGKEKNEVSISLALKGVYGNRIFTFDKNGKKGEGISFFIPPIKQDTDLKFIINETIDNSNIKQRGLIYIFVRKNVSENSFKLCDFTTGSTSLMELNSQVKEKKCTVKIKKGDIFGLKCPKGFAIFPQACFSNVLLEYYKSDYEDSEHINYYIHKDKKYNLKPKDVIELMDENFRELQNIQQYTGISNITDVLHFKNFNLGNLPLNFKNHYSTAYAKVPDTFNSIINFSCNCYNPEKHVYGTMQVESDNRNFDNIKKNENVIKNFLLPNIEKYALLLDDEERQKKIKQQQEEEQQEQILKDQDDRLSRHDDYNKNHTYILYDSNEHICDYEKNESLISTLPNDTKKIQKSICKINAKALDVVTIKCPHTKNFTPKDYFPNSSLITNDKKIVITFDKKNFVTYIDPTKKTFSLKDIYIQSFYGVSLDHLNQIKKIHEEWDDVHLFYPPHNVLHNVVLNNHIVNLSSALEGVLFMKSKVTGDETATKKNTTLPTDGVSSILIPPYVKEDITFHLFCGKSTTKKPNKKNTSLALIHIHISSNRNIIHGCDFLYLENQTNDAISNNNNNSYSIFTHNKNTENNLICDISLIPKTVIGIKCPNKKLNPQTCFDEVYYVKQEDVPSKTITADKYNTFSKDKIGNILKNAISINNPDEKDNTYTYLILPEKFEEELIDTKKVLACTCDNKYIIHMKIEKSTMDKIKIDEKKTIGKDICKYDVTTKVATCEIIDTIDSSVLKEHHTVHYSITLSRWDKLIIKYPTNEKTHFENFFVNPFNLKDKVLYNYNKPINIEHILPGAITTDIYDTRTKIKQYILRIPPYVHKDIHFSLEFNNSLSLTKQNQNIIYGNVAKIFIHINQGYKEIHGCDFTGKYSHLFTYSKKPLPNDDDICNVTIGNNTFSGFACLSHFELKPNNCFSSVYDYNEANKVKKLFDLSTKVELDHIKQNTSGYTLSYIIFNKESTKLKFSCTCSSNYSNYTIRITFDPNYIIPEPQSRAIIKYVDLQDKNFAKYLRKL</sequence>
<comment type="function">
    <text evidence="6">Gametocyte surface protein required for male/female gamete fusion. Also required for male gamete exflagellation and interaction with host erythrocytes.</text>
</comment>
<comment type="subunit">
    <text evidence="5">Heterodimer; heterodimerizes with PF45/48.</text>
</comment>
<comment type="subcellular location">
    <subcellularLocation>
        <location evidence="9">Cell surface</location>
    </subcellularLocation>
    <subcellularLocation>
        <location evidence="9">Cell membrane</location>
        <topology evidence="10">Peripheral membrane protein</topology>
        <orientation evidence="1">Extracellular side</orientation>
    </subcellularLocation>
</comment>
<comment type="developmental stage">
    <text evidence="5 9">Specifically expressed in gametocytes and gametes (at protein level).</text>
</comment>
<comment type="PTM">
    <text evidence="9">May be processed into a 310 kDa form as the parasite emerges from the host erythrocytes.</text>
</comment>
<comment type="biotechnology">
    <text evidence="7 8">Promising transmission-blocking vaccine candidate: targeting the protein would prevents transmission of the parasite decreasing the malaria burden (PubMed:32709983, PubMed:33741942). The LMIV230-01 transmission-blocking antibody against the 6-Cys domain 1 also binds to the heterologous P.falciparum Malian isolate 20-2217-0 which carries a 'Ser-605' polymorphism and to the heterologous St Lucia strain which carries 'Ser-605' and 'Asn-661' polymorphisms (PubMed:33741942).</text>
</comment>
<name>P230_PLAF7</name>
<proteinExistence type="evidence at protein level"/>
<dbReference type="EMBL" id="L04162">
    <property type="protein sequence ID" value="AAA57559.1"/>
    <property type="molecule type" value="mRNA"/>
</dbReference>
<dbReference type="EMBL" id="LN999943">
    <property type="protein sequence ID" value="CZT98104.1"/>
    <property type="molecule type" value="Genomic_DNA"/>
</dbReference>
<dbReference type="PIR" id="A48584">
    <property type="entry name" value="A48584"/>
</dbReference>
<dbReference type="RefSeq" id="XP_001349600.1">
    <property type="nucleotide sequence ID" value="XM_001349564.1"/>
</dbReference>
<dbReference type="PDB" id="6OHG">
    <property type="method" value="X-ray"/>
    <property type="resolution" value="2.38 A"/>
    <property type="chains" value="A=542-736"/>
</dbReference>
<dbReference type="PDB" id="7JUM">
    <property type="method" value="X-ray"/>
    <property type="resolution" value="2.00 A"/>
    <property type="chains" value="A/B/C=542-736"/>
</dbReference>
<dbReference type="PDB" id="7U9E">
    <property type="method" value="X-ray"/>
    <property type="resolution" value="2.39 A"/>
    <property type="chains" value="A=542-732"/>
</dbReference>
<dbReference type="PDB" id="7U9W">
    <property type="method" value="X-ray"/>
    <property type="resolution" value="2.79 A"/>
    <property type="chains" value="A=542-732"/>
</dbReference>
<dbReference type="PDB" id="7UA2">
    <property type="method" value="X-ray"/>
    <property type="resolution" value="2.19 A"/>
    <property type="chains" value="A=542-732"/>
</dbReference>
<dbReference type="PDB" id="7UA8">
    <property type="method" value="X-ray"/>
    <property type="resolution" value="2.80 A"/>
    <property type="chains" value="A/B=542-732"/>
</dbReference>
<dbReference type="PDB" id="7UBS">
    <property type="method" value="X-ray"/>
    <property type="resolution" value="2.50 A"/>
    <property type="chains" value="A/B/C/D=542-732"/>
</dbReference>
<dbReference type="PDB" id="7UC8">
    <property type="method" value="X-ray"/>
    <property type="resolution" value="2.90 A"/>
    <property type="chains" value="A/B/C=542-886"/>
</dbReference>
<dbReference type="PDB" id="7UCQ">
    <property type="method" value="X-ray"/>
    <property type="resolution" value="2.50 A"/>
    <property type="chains" value="A/B/C/D=542-732"/>
</dbReference>
<dbReference type="PDB" id="7UFW">
    <property type="method" value="X-ray"/>
    <property type="resolution" value="2.10 A"/>
    <property type="chains" value="A/B=542-886"/>
</dbReference>
<dbReference type="PDB" id="7UI1">
    <property type="method" value="X-ray"/>
    <property type="resolution" value="3.30 A"/>
    <property type="chains" value="A/B/C/D=542-886"/>
</dbReference>
<dbReference type="PDB" id="7USR">
    <property type="method" value="X-ray"/>
    <property type="resolution" value="1.93 A"/>
    <property type="chains" value="A=587-889"/>
</dbReference>
<dbReference type="PDB" id="7USS">
    <property type="method" value="X-ray"/>
    <property type="resolution" value="1.90 A"/>
    <property type="chains" value="A/B=532-889"/>
</dbReference>
<dbReference type="PDB" id="7UST">
    <property type="method" value="X-ray"/>
    <property type="resolution" value="1.70 A"/>
    <property type="chains" value="A=587-731"/>
</dbReference>
<dbReference type="PDB" id="7USV">
    <property type="method" value="X-ray"/>
    <property type="resolution" value="2.10 A"/>
    <property type="chains" value="A/B=587-731"/>
</dbReference>
<dbReference type="PDB" id="7UVH">
    <property type="method" value="X-ray"/>
    <property type="resolution" value="2.59 A"/>
    <property type="chains" value="C/F=552-731"/>
</dbReference>
<dbReference type="PDB" id="7UVI">
    <property type="method" value="X-ray"/>
    <property type="resolution" value="2.92 A"/>
    <property type="chains" value="C/F=552-731"/>
</dbReference>
<dbReference type="PDB" id="7UVO">
    <property type="method" value="X-ray"/>
    <property type="resolution" value="2.09 A"/>
    <property type="chains" value="C=552-731"/>
</dbReference>
<dbReference type="PDB" id="7UVQ">
    <property type="method" value="X-ray"/>
    <property type="resolution" value="3.29 A"/>
    <property type="chains" value="A=552-731"/>
</dbReference>
<dbReference type="PDB" id="7UVS">
    <property type="method" value="X-ray"/>
    <property type="resolution" value="2.06 A"/>
    <property type="chains" value="C/F=552-731"/>
</dbReference>
<dbReference type="PDBsum" id="6OHG"/>
<dbReference type="PDBsum" id="7JUM"/>
<dbReference type="PDBsum" id="7U9E"/>
<dbReference type="PDBsum" id="7U9W"/>
<dbReference type="PDBsum" id="7UA2"/>
<dbReference type="PDBsum" id="7UA8"/>
<dbReference type="PDBsum" id="7UBS"/>
<dbReference type="PDBsum" id="7UC8"/>
<dbReference type="PDBsum" id="7UCQ"/>
<dbReference type="PDBsum" id="7UFW"/>
<dbReference type="PDBsum" id="7UI1"/>
<dbReference type="PDBsum" id="7USR"/>
<dbReference type="PDBsum" id="7USS"/>
<dbReference type="PDBsum" id="7UST"/>
<dbReference type="PDBsum" id="7USV"/>
<dbReference type="PDBsum" id="7UVH"/>
<dbReference type="PDBsum" id="7UVI"/>
<dbReference type="PDBsum" id="7UVO"/>
<dbReference type="PDBsum" id="7UVQ"/>
<dbReference type="PDBsum" id="7UVS"/>
<dbReference type="SMR" id="P68874"/>
<dbReference type="FunCoup" id="P68874">
    <property type="interactions" value="213"/>
</dbReference>
<dbReference type="STRING" id="36329.P68874"/>
<dbReference type="GlyCosmos" id="P68874">
    <property type="glycosylation" value="44 sites, No reported glycans"/>
</dbReference>
<dbReference type="PaxDb" id="5833-PFB0405w"/>
<dbReference type="ABCD" id="P68874">
    <property type="antibodies" value="1 sequenced antibody"/>
</dbReference>
<dbReference type="EnsemblProtists" id="CZT98104">
    <property type="protein sequence ID" value="CZT98104"/>
    <property type="gene ID" value="PF3D7_0209000"/>
</dbReference>
<dbReference type="GeneID" id="812682"/>
<dbReference type="KEGG" id="pfa:PF3D7_0209000"/>
<dbReference type="VEuPathDB" id="PlasmoDB:PF3D7_0209000"/>
<dbReference type="HOGENOM" id="CLU_227531_0_0_1"/>
<dbReference type="InParanoid" id="P68874"/>
<dbReference type="OMA" id="EYTCDFT"/>
<dbReference type="OrthoDB" id="369933at2759"/>
<dbReference type="PhylomeDB" id="P68874"/>
<dbReference type="Proteomes" id="UP000001450">
    <property type="component" value="Chromosome 2"/>
</dbReference>
<dbReference type="GO" id="GO:0009986">
    <property type="term" value="C:cell surface"/>
    <property type="evidence" value="ECO:0007669"/>
    <property type="project" value="UniProtKB-SubCell"/>
</dbReference>
<dbReference type="GO" id="GO:0005886">
    <property type="term" value="C:plasma membrane"/>
    <property type="evidence" value="ECO:0007669"/>
    <property type="project" value="UniProtKB-SubCell"/>
</dbReference>
<dbReference type="FunFam" id="2.60.40.2860:FF:000004">
    <property type="entry name" value="Transmission-blocking target antigen S230"/>
    <property type="match status" value="1"/>
</dbReference>
<dbReference type="FunFam" id="2.60.40.2860:FF:000007">
    <property type="entry name" value="Transmission-blocking target antigen S230"/>
    <property type="match status" value="1"/>
</dbReference>
<dbReference type="FunFam" id="2.60.40.2860:FF:000009">
    <property type="entry name" value="Transmission-blocking target antigen S230"/>
    <property type="match status" value="1"/>
</dbReference>
<dbReference type="FunFam" id="2.60.40.2860:FF:000015">
    <property type="entry name" value="Transmission-blocking target antigen s230"/>
    <property type="match status" value="1"/>
</dbReference>
<dbReference type="Gene3D" id="2.60.40.2860">
    <property type="match status" value="9"/>
</dbReference>
<dbReference type="InterPro" id="IPR010884">
    <property type="entry name" value="6_CYS_dom"/>
</dbReference>
<dbReference type="InterPro" id="IPR038160">
    <property type="entry name" value="6_CYS_dom_sf"/>
</dbReference>
<dbReference type="InterPro" id="IPR051444">
    <property type="entry name" value="Parasite_Repro/Invasion_Surf"/>
</dbReference>
<dbReference type="PANTHER" id="PTHR38796">
    <property type="match status" value="1"/>
</dbReference>
<dbReference type="PANTHER" id="PTHR38796:SF1">
    <property type="entry name" value="ANCHORED PROTEIN, PUTATIVE (AFU_ORTHOLOGUE AFUA_4G09600)-RELATED"/>
    <property type="match status" value="1"/>
</dbReference>
<dbReference type="Pfam" id="PF07422">
    <property type="entry name" value="s48_45"/>
    <property type="match status" value="7"/>
</dbReference>
<dbReference type="SMART" id="SM00970">
    <property type="entry name" value="s48_45"/>
    <property type="match status" value="9"/>
</dbReference>
<dbReference type="PROSITE" id="PS51701">
    <property type="entry name" value="6_CYS"/>
    <property type="match status" value="14"/>
</dbReference>
<accession>P68874</accession>
<accession>A0A143ZY09</accession>
<accession>Q08372</accession>
<organism>
    <name type="scientific">Plasmodium falciparum (isolate 3D7)</name>
    <dbReference type="NCBI Taxonomy" id="36329"/>
    <lineage>
        <taxon>Eukaryota</taxon>
        <taxon>Sar</taxon>
        <taxon>Alveolata</taxon>
        <taxon>Apicomplexa</taxon>
        <taxon>Aconoidasida</taxon>
        <taxon>Haemosporida</taxon>
        <taxon>Plasmodiidae</taxon>
        <taxon>Plasmodium</taxon>
        <taxon>Plasmodium (Laverania)</taxon>
    </lineage>
</organism>
<gene>
    <name type="primary">PFS230</name>
    <name type="synonym">PF230</name>
    <name type="synonym">S230</name>
    <name type="ORF">PF3D7_0209000</name>
</gene>